<keyword id="KW-0414">Isoprene biosynthesis</keyword>
<keyword id="KW-0456">Lyase</keyword>
<keyword id="KW-0479">Metal-binding</keyword>
<reference key="1">
    <citation type="journal article" date="2009" name="PLoS ONE">
        <title>Salmonella paratyphi C: genetic divergence from Salmonella choleraesuis and pathogenic convergence with Salmonella typhi.</title>
        <authorList>
            <person name="Liu W.-Q."/>
            <person name="Feng Y."/>
            <person name="Wang Y."/>
            <person name="Zou Q.-H."/>
            <person name="Chen F."/>
            <person name="Guo J.-T."/>
            <person name="Peng Y.-H."/>
            <person name="Jin Y."/>
            <person name="Li Y.-G."/>
            <person name="Hu S.-N."/>
            <person name="Johnston R.N."/>
            <person name="Liu G.-R."/>
            <person name="Liu S.-L."/>
        </authorList>
    </citation>
    <scope>NUCLEOTIDE SEQUENCE [LARGE SCALE GENOMIC DNA]</scope>
    <source>
        <strain>RKS4594</strain>
    </source>
</reference>
<protein>
    <recommendedName>
        <fullName evidence="1">2-C-methyl-D-erythritol 2,4-cyclodiphosphate synthase</fullName>
        <shortName evidence="1">MECDP-synthase</shortName>
        <shortName evidence="1">MECPP-synthase</shortName>
        <shortName evidence="1">MECPS</shortName>
        <ecNumber evidence="1">4.6.1.12</ecNumber>
    </recommendedName>
</protein>
<gene>
    <name evidence="1" type="primary">ispF</name>
    <name type="ordered locus">SPC_2972</name>
</gene>
<evidence type="ECO:0000255" key="1">
    <source>
        <dbReference type="HAMAP-Rule" id="MF_00107"/>
    </source>
</evidence>
<feature type="chain" id="PRO_1000190718" description="2-C-methyl-D-erythritol 2,4-cyclodiphosphate synthase">
    <location>
        <begin position="1"/>
        <end position="159"/>
    </location>
</feature>
<feature type="binding site" evidence="1">
    <location>
        <begin position="8"/>
        <end position="10"/>
    </location>
    <ligand>
        <name>4-CDP-2-C-methyl-D-erythritol 2-phosphate</name>
        <dbReference type="ChEBI" id="CHEBI:57919"/>
    </ligand>
</feature>
<feature type="binding site" evidence="1">
    <location>
        <position position="8"/>
    </location>
    <ligand>
        <name>a divalent metal cation</name>
        <dbReference type="ChEBI" id="CHEBI:60240"/>
    </ligand>
</feature>
<feature type="binding site" evidence="1">
    <location>
        <position position="10"/>
    </location>
    <ligand>
        <name>a divalent metal cation</name>
        <dbReference type="ChEBI" id="CHEBI:60240"/>
    </ligand>
</feature>
<feature type="binding site" evidence="1">
    <location>
        <begin position="34"/>
        <end position="35"/>
    </location>
    <ligand>
        <name>4-CDP-2-C-methyl-D-erythritol 2-phosphate</name>
        <dbReference type="ChEBI" id="CHEBI:57919"/>
    </ligand>
</feature>
<feature type="binding site" evidence="1">
    <location>
        <position position="42"/>
    </location>
    <ligand>
        <name>a divalent metal cation</name>
        <dbReference type="ChEBI" id="CHEBI:60240"/>
    </ligand>
</feature>
<feature type="binding site" evidence="1">
    <location>
        <begin position="56"/>
        <end position="58"/>
    </location>
    <ligand>
        <name>4-CDP-2-C-methyl-D-erythritol 2-phosphate</name>
        <dbReference type="ChEBI" id="CHEBI:57919"/>
    </ligand>
</feature>
<feature type="binding site" evidence="1">
    <location>
        <begin position="61"/>
        <end position="65"/>
    </location>
    <ligand>
        <name>4-CDP-2-C-methyl-D-erythritol 2-phosphate</name>
        <dbReference type="ChEBI" id="CHEBI:57919"/>
    </ligand>
</feature>
<feature type="binding site" evidence="1">
    <location>
        <begin position="100"/>
        <end position="106"/>
    </location>
    <ligand>
        <name>4-CDP-2-C-methyl-D-erythritol 2-phosphate</name>
        <dbReference type="ChEBI" id="CHEBI:57919"/>
    </ligand>
</feature>
<feature type="binding site" evidence="1">
    <location>
        <begin position="132"/>
        <end position="135"/>
    </location>
    <ligand>
        <name>4-CDP-2-C-methyl-D-erythritol 2-phosphate</name>
        <dbReference type="ChEBI" id="CHEBI:57919"/>
    </ligand>
</feature>
<feature type="binding site" evidence="1">
    <location>
        <position position="139"/>
    </location>
    <ligand>
        <name>4-CDP-2-C-methyl-D-erythritol 2-phosphate</name>
        <dbReference type="ChEBI" id="CHEBI:57919"/>
    </ligand>
</feature>
<feature type="binding site" evidence="1">
    <location>
        <position position="142"/>
    </location>
    <ligand>
        <name>4-CDP-2-C-methyl-D-erythritol 2-phosphate</name>
        <dbReference type="ChEBI" id="CHEBI:57919"/>
    </ligand>
</feature>
<feature type="site" description="Transition state stabilizer" evidence="1">
    <location>
        <position position="34"/>
    </location>
</feature>
<feature type="site" description="Transition state stabilizer" evidence="1">
    <location>
        <position position="133"/>
    </location>
</feature>
<dbReference type="EC" id="4.6.1.12" evidence="1"/>
<dbReference type="EMBL" id="CP000857">
    <property type="protein sequence ID" value="ACN47064.1"/>
    <property type="molecule type" value="Genomic_DNA"/>
</dbReference>
<dbReference type="RefSeq" id="WP_001219244.1">
    <property type="nucleotide sequence ID" value="NC_012125.1"/>
</dbReference>
<dbReference type="SMR" id="C0PXA6"/>
<dbReference type="KEGG" id="sei:SPC_2972"/>
<dbReference type="HOGENOM" id="CLU_084630_2_0_6"/>
<dbReference type="UniPathway" id="UPA00056">
    <property type="reaction ID" value="UER00095"/>
</dbReference>
<dbReference type="Proteomes" id="UP000001599">
    <property type="component" value="Chromosome"/>
</dbReference>
<dbReference type="GO" id="GO:0008685">
    <property type="term" value="F:2-C-methyl-D-erythritol 2,4-cyclodiphosphate synthase activity"/>
    <property type="evidence" value="ECO:0007669"/>
    <property type="project" value="UniProtKB-UniRule"/>
</dbReference>
<dbReference type="GO" id="GO:0046872">
    <property type="term" value="F:metal ion binding"/>
    <property type="evidence" value="ECO:0007669"/>
    <property type="project" value="UniProtKB-KW"/>
</dbReference>
<dbReference type="GO" id="GO:0019288">
    <property type="term" value="P:isopentenyl diphosphate biosynthetic process, methylerythritol 4-phosphate pathway"/>
    <property type="evidence" value="ECO:0007669"/>
    <property type="project" value="UniProtKB-UniRule"/>
</dbReference>
<dbReference type="GO" id="GO:0016114">
    <property type="term" value="P:terpenoid biosynthetic process"/>
    <property type="evidence" value="ECO:0007669"/>
    <property type="project" value="InterPro"/>
</dbReference>
<dbReference type="CDD" id="cd00554">
    <property type="entry name" value="MECDP_synthase"/>
    <property type="match status" value="1"/>
</dbReference>
<dbReference type="FunFam" id="3.30.1330.50:FF:000001">
    <property type="entry name" value="2-C-methyl-D-erythritol 2,4-cyclodiphosphate synthase"/>
    <property type="match status" value="1"/>
</dbReference>
<dbReference type="Gene3D" id="3.30.1330.50">
    <property type="entry name" value="2-C-methyl-D-erythritol 2,4-cyclodiphosphate synthase"/>
    <property type="match status" value="1"/>
</dbReference>
<dbReference type="HAMAP" id="MF_00107">
    <property type="entry name" value="IspF"/>
    <property type="match status" value="1"/>
</dbReference>
<dbReference type="InterPro" id="IPR003526">
    <property type="entry name" value="MECDP_synthase"/>
</dbReference>
<dbReference type="InterPro" id="IPR020555">
    <property type="entry name" value="MECDP_synthase_CS"/>
</dbReference>
<dbReference type="InterPro" id="IPR036571">
    <property type="entry name" value="MECDP_synthase_sf"/>
</dbReference>
<dbReference type="NCBIfam" id="TIGR00151">
    <property type="entry name" value="ispF"/>
    <property type="match status" value="1"/>
</dbReference>
<dbReference type="PANTHER" id="PTHR43181">
    <property type="entry name" value="2-C-METHYL-D-ERYTHRITOL 2,4-CYCLODIPHOSPHATE SYNTHASE, CHLOROPLASTIC"/>
    <property type="match status" value="1"/>
</dbReference>
<dbReference type="PANTHER" id="PTHR43181:SF1">
    <property type="entry name" value="2-C-METHYL-D-ERYTHRITOL 2,4-CYCLODIPHOSPHATE SYNTHASE, CHLOROPLASTIC"/>
    <property type="match status" value="1"/>
</dbReference>
<dbReference type="Pfam" id="PF02542">
    <property type="entry name" value="YgbB"/>
    <property type="match status" value="1"/>
</dbReference>
<dbReference type="SUPFAM" id="SSF69765">
    <property type="entry name" value="IpsF-like"/>
    <property type="match status" value="1"/>
</dbReference>
<dbReference type="PROSITE" id="PS01350">
    <property type="entry name" value="ISPF"/>
    <property type="match status" value="1"/>
</dbReference>
<organism>
    <name type="scientific">Salmonella paratyphi C (strain RKS4594)</name>
    <dbReference type="NCBI Taxonomy" id="476213"/>
    <lineage>
        <taxon>Bacteria</taxon>
        <taxon>Pseudomonadati</taxon>
        <taxon>Pseudomonadota</taxon>
        <taxon>Gammaproteobacteria</taxon>
        <taxon>Enterobacterales</taxon>
        <taxon>Enterobacteriaceae</taxon>
        <taxon>Salmonella</taxon>
    </lineage>
</organism>
<comment type="function">
    <text evidence="1">Involved in the biosynthesis of isopentenyl diphosphate (IPP) and dimethylallyl diphosphate (DMAPP), two major building blocks of isoprenoid compounds. Catalyzes the conversion of 4-diphosphocytidyl-2-C-methyl-D-erythritol 2-phosphate (CDP-ME2P) to 2-C-methyl-D-erythritol 2,4-cyclodiphosphate (ME-CPP) with a corresponding release of cytidine 5-monophosphate (CMP).</text>
</comment>
<comment type="catalytic activity">
    <reaction evidence="1">
        <text>4-CDP-2-C-methyl-D-erythritol 2-phosphate = 2-C-methyl-D-erythritol 2,4-cyclic diphosphate + CMP</text>
        <dbReference type="Rhea" id="RHEA:23864"/>
        <dbReference type="ChEBI" id="CHEBI:57919"/>
        <dbReference type="ChEBI" id="CHEBI:58483"/>
        <dbReference type="ChEBI" id="CHEBI:60377"/>
        <dbReference type="EC" id="4.6.1.12"/>
    </reaction>
</comment>
<comment type="cofactor">
    <cofactor evidence="1">
        <name>a divalent metal cation</name>
        <dbReference type="ChEBI" id="CHEBI:60240"/>
    </cofactor>
    <text evidence="1">Binds 1 divalent metal cation per subunit.</text>
</comment>
<comment type="pathway">
    <text evidence="1">Isoprenoid biosynthesis; isopentenyl diphosphate biosynthesis via DXP pathway; isopentenyl diphosphate from 1-deoxy-D-xylulose 5-phosphate: step 4/6.</text>
</comment>
<comment type="subunit">
    <text evidence="1">Homotrimer.</text>
</comment>
<comment type="similarity">
    <text evidence="1">Belongs to the IspF family.</text>
</comment>
<name>ISPF_SALPC</name>
<accession>C0PXA6</accession>
<proteinExistence type="inferred from homology"/>
<sequence>MRIGHGFDVHAFGGEGPIIIGGVRIPYEKGLLAHSDGDVALHALTDALLGAAALGDIGKLFPDTDPAFKGADSRELLREAWRRIQAKGYTLGNVDVTIIAQAPKMLPHIPQMRVFIAEDLGCHMDDVNVKATTTEKLGFTGRGEGIACEAVALLMKAAK</sequence>